<keyword id="KW-0238">DNA-binding</keyword>
<keyword id="KW-0479">Metal-binding</keyword>
<keyword id="KW-0539">Nucleus</keyword>
<keyword id="KW-1185">Reference proteome</keyword>
<keyword id="KW-0678">Repressor</keyword>
<keyword id="KW-0804">Transcription</keyword>
<keyword id="KW-0805">Transcription regulation</keyword>
<keyword id="KW-0862">Zinc</keyword>
<keyword id="KW-0863">Zinc-finger</keyword>
<organism>
    <name type="scientific">Aedes aegypti</name>
    <name type="common">Yellowfever mosquito</name>
    <name type="synonym">Culex aegypti</name>
    <dbReference type="NCBI Taxonomy" id="7159"/>
    <lineage>
        <taxon>Eukaryota</taxon>
        <taxon>Metazoa</taxon>
        <taxon>Ecdysozoa</taxon>
        <taxon>Arthropoda</taxon>
        <taxon>Hexapoda</taxon>
        <taxon>Insecta</taxon>
        <taxon>Pterygota</taxon>
        <taxon>Neoptera</taxon>
        <taxon>Endopterygota</taxon>
        <taxon>Diptera</taxon>
        <taxon>Nematocera</taxon>
        <taxon>Culicoidea</taxon>
        <taxon>Culicidae</taxon>
        <taxon>Culicinae</taxon>
        <taxon>Aedini</taxon>
        <taxon>Aedes</taxon>
        <taxon>Stegomyia</taxon>
    </lineage>
</organism>
<evidence type="ECO:0000250" key="1"/>
<evidence type="ECO:0000305" key="2"/>
<feature type="chain" id="PRO_0000309506" description="Histone deacetylase complex subunit SAP30 homolog">
    <location>
        <begin position="1"/>
        <end position="173"/>
    </location>
</feature>
<feature type="zinc finger region" description="Atypical">
    <location>
        <begin position="21"/>
        <end position="69"/>
    </location>
</feature>
<dbReference type="EMBL" id="CH477187">
    <property type="protein sequence ID" value="EAT48877.1"/>
    <property type="molecule type" value="Genomic_DNA"/>
</dbReference>
<dbReference type="SMR" id="Q17Q39"/>
<dbReference type="FunCoup" id="Q17Q39">
    <property type="interactions" value="737"/>
</dbReference>
<dbReference type="STRING" id="7159.Q17Q39"/>
<dbReference type="PaxDb" id="7159-AAEL000149-PA"/>
<dbReference type="EnsemblMetazoa" id="AAEL000149-RA">
    <property type="protein sequence ID" value="AAEL000149-PA"/>
    <property type="gene ID" value="AAEL000149"/>
</dbReference>
<dbReference type="GeneID" id="5567784"/>
<dbReference type="KEGG" id="aag:5567784"/>
<dbReference type="CTD" id="8819"/>
<dbReference type="VEuPathDB" id="VectorBase:AAEL000149"/>
<dbReference type="eggNOG" id="ENOG502QWFH">
    <property type="taxonomic scope" value="Eukaryota"/>
</dbReference>
<dbReference type="HOGENOM" id="CLU_097961_1_0_1"/>
<dbReference type="InParanoid" id="Q17Q39"/>
<dbReference type="OMA" id="SDQICCL"/>
<dbReference type="OrthoDB" id="510958at2759"/>
<dbReference type="PhylomeDB" id="Q17Q39"/>
<dbReference type="Proteomes" id="UP000008820">
    <property type="component" value="Chromosome 1"/>
</dbReference>
<dbReference type="Proteomes" id="UP000682892">
    <property type="component" value="Chromosome 2"/>
</dbReference>
<dbReference type="GO" id="GO:0000118">
    <property type="term" value="C:histone deacetylase complex"/>
    <property type="evidence" value="ECO:0007669"/>
    <property type="project" value="TreeGrafter"/>
</dbReference>
<dbReference type="GO" id="GO:0003677">
    <property type="term" value="F:DNA binding"/>
    <property type="evidence" value="ECO:0007669"/>
    <property type="project" value="UniProtKB-KW"/>
</dbReference>
<dbReference type="GO" id="GO:0003712">
    <property type="term" value="F:transcription coregulator activity"/>
    <property type="evidence" value="ECO:0007669"/>
    <property type="project" value="TreeGrafter"/>
</dbReference>
<dbReference type="GO" id="GO:0008270">
    <property type="term" value="F:zinc ion binding"/>
    <property type="evidence" value="ECO:0007669"/>
    <property type="project" value="UniProtKB-KW"/>
</dbReference>
<dbReference type="GO" id="GO:0006355">
    <property type="term" value="P:regulation of DNA-templated transcription"/>
    <property type="evidence" value="ECO:0007669"/>
    <property type="project" value="TreeGrafter"/>
</dbReference>
<dbReference type="FunFam" id="3.40.1800.30:FF:000001">
    <property type="entry name" value="Histone deacetylase complex subunit"/>
    <property type="match status" value="1"/>
</dbReference>
<dbReference type="Gene3D" id="3.40.1800.30">
    <property type="match status" value="1"/>
</dbReference>
<dbReference type="Gene3D" id="6.10.160.20">
    <property type="match status" value="1"/>
</dbReference>
<dbReference type="InterPro" id="IPR024145">
    <property type="entry name" value="His_deAcase_SAP30/SAP30L"/>
</dbReference>
<dbReference type="InterPro" id="IPR038291">
    <property type="entry name" value="SAP30_C_sf"/>
</dbReference>
<dbReference type="InterPro" id="IPR025718">
    <property type="entry name" value="SAP30_Sin3-bd"/>
</dbReference>
<dbReference type="InterPro" id="IPR025717">
    <property type="entry name" value="SAP30_zn-finger"/>
</dbReference>
<dbReference type="PANTHER" id="PTHR13286:SF6">
    <property type="entry name" value="HISTONE DEACETYLASE COMPLEX SUBUNIT SAP30L-RELATED"/>
    <property type="match status" value="1"/>
</dbReference>
<dbReference type="PANTHER" id="PTHR13286">
    <property type="entry name" value="SAP30"/>
    <property type="match status" value="1"/>
</dbReference>
<dbReference type="Pfam" id="PF13867">
    <property type="entry name" value="SAP30_Sin3_bdg"/>
    <property type="match status" value="1"/>
</dbReference>
<dbReference type="Pfam" id="PF13866">
    <property type="entry name" value="zf-SAP30"/>
    <property type="match status" value="1"/>
</dbReference>
<proteinExistence type="inferred from homology"/>
<accession>Q17Q39</accession>
<reference key="1">
    <citation type="journal article" date="2007" name="Science">
        <title>Genome sequence of Aedes aegypti, a major arbovirus vector.</title>
        <authorList>
            <person name="Nene V."/>
            <person name="Wortman J.R."/>
            <person name="Lawson D."/>
            <person name="Haas B.J."/>
            <person name="Kodira C.D."/>
            <person name="Tu Z.J."/>
            <person name="Loftus B.J."/>
            <person name="Xi Z."/>
            <person name="Megy K."/>
            <person name="Grabherr M."/>
            <person name="Ren Q."/>
            <person name="Zdobnov E.M."/>
            <person name="Lobo N.F."/>
            <person name="Campbell K.S."/>
            <person name="Brown S.E."/>
            <person name="Bonaldo M.F."/>
            <person name="Zhu J."/>
            <person name="Sinkins S.P."/>
            <person name="Hogenkamp D.G."/>
            <person name="Amedeo P."/>
            <person name="Arensburger P."/>
            <person name="Atkinson P.W."/>
            <person name="Bidwell S.L."/>
            <person name="Biedler J."/>
            <person name="Birney E."/>
            <person name="Bruggner R.V."/>
            <person name="Costas J."/>
            <person name="Coy M.R."/>
            <person name="Crabtree J."/>
            <person name="Crawford M."/>
            <person name="DeBruyn B."/>
            <person name="DeCaprio D."/>
            <person name="Eiglmeier K."/>
            <person name="Eisenstadt E."/>
            <person name="El-Dorry H."/>
            <person name="Gelbart W.M."/>
            <person name="Gomes S.L."/>
            <person name="Hammond M."/>
            <person name="Hannick L.I."/>
            <person name="Hogan J.R."/>
            <person name="Holmes M.H."/>
            <person name="Jaffe D."/>
            <person name="Johnston S.J."/>
            <person name="Kennedy R.C."/>
            <person name="Koo H."/>
            <person name="Kravitz S."/>
            <person name="Kriventseva E.V."/>
            <person name="Kulp D."/>
            <person name="Labutti K."/>
            <person name="Lee E."/>
            <person name="Li S."/>
            <person name="Lovin D.D."/>
            <person name="Mao C."/>
            <person name="Mauceli E."/>
            <person name="Menck C.F."/>
            <person name="Miller J.R."/>
            <person name="Montgomery P."/>
            <person name="Mori A."/>
            <person name="Nascimento A.L."/>
            <person name="Naveira H.F."/>
            <person name="Nusbaum C."/>
            <person name="O'Leary S.B."/>
            <person name="Orvis J."/>
            <person name="Pertea M."/>
            <person name="Quesneville H."/>
            <person name="Reidenbach K.R."/>
            <person name="Rogers Y.-H.C."/>
            <person name="Roth C.W."/>
            <person name="Schneider J.R."/>
            <person name="Schatz M."/>
            <person name="Shumway M."/>
            <person name="Stanke M."/>
            <person name="Stinson E.O."/>
            <person name="Tubio J.M.C."/>
            <person name="Vanzee J.P."/>
            <person name="Verjovski-Almeida S."/>
            <person name="Werner D."/>
            <person name="White O.R."/>
            <person name="Wyder S."/>
            <person name="Zeng Q."/>
            <person name="Zhao Q."/>
            <person name="Zhao Y."/>
            <person name="Hill C.A."/>
            <person name="Raikhel A.S."/>
            <person name="Soares M.B."/>
            <person name="Knudson D.L."/>
            <person name="Lee N.H."/>
            <person name="Galagan J."/>
            <person name="Salzberg S.L."/>
            <person name="Paulsen I.T."/>
            <person name="Dimopoulos G."/>
            <person name="Collins F.H."/>
            <person name="Bruce B."/>
            <person name="Fraser-Liggett C.M."/>
            <person name="Severson D.W."/>
        </authorList>
    </citation>
    <scope>NUCLEOTIDE SEQUENCE [LARGE SCALE GENOMIC DNA]</scope>
    <source>
        <strain>LVPib12</strain>
    </source>
</reference>
<sequence>MNNNGFSTGEEDSRGPADQVCCLLDDGDRCRNQAGNASYSKRIQKTVTQRRLKLSIDTAARHIYICDFHKGRIQCARTKRRRRDSEDDSNETDTDLPEVDLYQLQVNTLRRYKRFYKVSTRPGINKAQLSETIMKHFKTIPIKEKEILTYFIYMVKSNSNKLDQKNNTSNEAT</sequence>
<gene>
    <name type="ORF">AAEL000149</name>
</gene>
<protein>
    <recommendedName>
        <fullName>Histone deacetylase complex subunit SAP30 homolog</fullName>
    </recommendedName>
</protein>
<comment type="function">
    <text evidence="1">Required for the function of the class 1 Sin3-histone deacetylase complex (HDAC).</text>
</comment>
<comment type="subunit">
    <text evidence="1">Component of the class 1 Sin3-histone deacetylase complex (HDAC).</text>
</comment>
<comment type="subcellular location">
    <subcellularLocation>
        <location evidence="1">Nucleus</location>
    </subcellularLocation>
</comment>
<comment type="similarity">
    <text evidence="2">Belongs to the SAP30 family.</text>
</comment>
<name>SAP30_AEDAE</name>